<dbReference type="EC" id="1.1.1.262" evidence="1"/>
<dbReference type="EMBL" id="AE003849">
    <property type="protein sequence ID" value="AAF83649.1"/>
    <property type="molecule type" value="Genomic_DNA"/>
</dbReference>
<dbReference type="PIR" id="D82756">
    <property type="entry name" value="D82756"/>
</dbReference>
<dbReference type="RefSeq" id="WP_010893359.1">
    <property type="nucleotide sequence ID" value="NC_002488.3"/>
</dbReference>
<dbReference type="SMR" id="Q9PF39"/>
<dbReference type="STRING" id="160492.XF_0839"/>
<dbReference type="KEGG" id="xfa:XF_0839"/>
<dbReference type="PATRIC" id="fig|160492.11.peg.883"/>
<dbReference type="eggNOG" id="COG1995">
    <property type="taxonomic scope" value="Bacteria"/>
</dbReference>
<dbReference type="HOGENOM" id="CLU_040168_1_0_6"/>
<dbReference type="UniPathway" id="UPA00244">
    <property type="reaction ID" value="UER00312"/>
</dbReference>
<dbReference type="Proteomes" id="UP000000812">
    <property type="component" value="Chromosome"/>
</dbReference>
<dbReference type="GO" id="GO:0005737">
    <property type="term" value="C:cytoplasm"/>
    <property type="evidence" value="ECO:0007669"/>
    <property type="project" value="UniProtKB-SubCell"/>
</dbReference>
<dbReference type="GO" id="GO:0050570">
    <property type="term" value="F:4-hydroxythreonine-4-phosphate dehydrogenase activity"/>
    <property type="evidence" value="ECO:0007669"/>
    <property type="project" value="UniProtKB-UniRule"/>
</dbReference>
<dbReference type="GO" id="GO:0050897">
    <property type="term" value="F:cobalt ion binding"/>
    <property type="evidence" value="ECO:0007669"/>
    <property type="project" value="UniProtKB-UniRule"/>
</dbReference>
<dbReference type="GO" id="GO:0000287">
    <property type="term" value="F:magnesium ion binding"/>
    <property type="evidence" value="ECO:0007669"/>
    <property type="project" value="UniProtKB-UniRule"/>
</dbReference>
<dbReference type="GO" id="GO:0051287">
    <property type="term" value="F:NAD binding"/>
    <property type="evidence" value="ECO:0007669"/>
    <property type="project" value="InterPro"/>
</dbReference>
<dbReference type="GO" id="GO:0008270">
    <property type="term" value="F:zinc ion binding"/>
    <property type="evidence" value="ECO:0007669"/>
    <property type="project" value="UniProtKB-UniRule"/>
</dbReference>
<dbReference type="GO" id="GO:0042823">
    <property type="term" value="P:pyridoxal phosphate biosynthetic process"/>
    <property type="evidence" value="ECO:0007669"/>
    <property type="project" value="UniProtKB-UniRule"/>
</dbReference>
<dbReference type="GO" id="GO:0008615">
    <property type="term" value="P:pyridoxine biosynthetic process"/>
    <property type="evidence" value="ECO:0007669"/>
    <property type="project" value="UniProtKB-UniRule"/>
</dbReference>
<dbReference type="Gene3D" id="3.40.718.10">
    <property type="entry name" value="Isopropylmalate Dehydrogenase"/>
    <property type="match status" value="1"/>
</dbReference>
<dbReference type="HAMAP" id="MF_00536">
    <property type="entry name" value="PdxA"/>
    <property type="match status" value="1"/>
</dbReference>
<dbReference type="InterPro" id="IPR037510">
    <property type="entry name" value="PdxA"/>
</dbReference>
<dbReference type="InterPro" id="IPR005255">
    <property type="entry name" value="PdxA_fam"/>
</dbReference>
<dbReference type="NCBIfam" id="TIGR00557">
    <property type="entry name" value="pdxA"/>
    <property type="match status" value="1"/>
</dbReference>
<dbReference type="PANTHER" id="PTHR30004">
    <property type="entry name" value="4-HYDROXYTHREONINE-4-PHOSPHATE DEHYDROGENASE"/>
    <property type="match status" value="1"/>
</dbReference>
<dbReference type="PANTHER" id="PTHR30004:SF5">
    <property type="entry name" value="4-HYDROXYTHREONINE-4-PHOSPHATE DEHYDROGENASE"/>
    <property type="match status" value="1"/>
</dbReference>
<dbReference type="Pfam" id="PF04166">
    <property type="entry name" value="PdxA"/>
    <property type="match status" value="1"/>
</dbReference>
<dbReference type="SUPFAM" id="SSF53659">
    <property type="entry name" value="Isocitrate/Isopropylmalate dehydrogenase-like"/>
    <property type="match status" value="1"/>
</dbReference>
<evidence type="ECO:0000255" key="1">
    <source>
        <dbReference type="HAMAP-Rule" id="MF_00536"/>
    </source>
</evidence>
<proteinExistence type="inferred from homology"/>
<gene>
    <name evidence="1" type="primary">pdxA</name>
    <name type="ordered locus">XF_0839</name>
</gene>
<organism>
    <name type="scientific">Xylella fastidiosa (strain 9a5c)</name>
    <dbReference type="NCBI Taxonomy" id="160492"/>
    <lineage>
        <taxon>Bacteria</taxon>
        <taxon>Pseudomonadati</taxon>
        <taxon>Pseudomonadota</taxon>
        <taxon>Gammaproteobacteria</taxon>
        <taxon>Lysobacterales</taxon>
        <taxon>Lysobacteraceae</taxon>
        <taxon>Xylella</taxon>
    </lineage>
</organism>
<accession>Q9PF39</accession>
<feature type="chain" id="PRO_0000188839" description="4-hydroxythreonine-4-phosphate dehydrogenase">
    <location>
        <begin position="1"/>
        <end position="330"/>
    </location>
</feature>
<feature type="binding site" evidence="1">
    <location>
        <position position="133"/>
    </location>
    <ligand>
        <name>substrate</name>
    </ligand>
</feature>
<feature type="binding site" evidence="1">
    <location>
        <position position="161"/>
    </location>
    <ligand>
        <name>a divalent metal cation</name>
        <dbReference type="ChEBI" id="CHEBI:60240"/>
        <note>ligand shared between dimeric partners</note>
    </ligand>
</feature>
<feature type="binding site" evidence="1">
    <location>
        <position position="206"/>
    </location>
    <ligand>
        <name>a divalent metal cation</name>
        <dbReference type="ChEBI" id="CHEBI:60240"/>
        <note>ligand shared between dimeric partners</note>
    </ligand>
</feature>
<feature type="binding site" evidence="1">
    <location>
        <position position="261"/>
    </location>
    <ligand>
        <name>a divalent metal cation</name>
        <dbReference type="ChEBI" id="CHEBI:60240"/>
        <note>ligand shared between dimeric partners</note>
    </ligand>
</feature>
<feature type="binding site" evidence="1">
    <location>
        <position position="269"/>
    </location>
    <ligand>
        <name>substrate</name>
    </ligand>
</feature>
<feature type="binding site" evidence="1">
    <location>
        <position position="278"/>
    </location>
    <ligand>
        <name>substrate</name>
    </ligand>
</feature>
<feature type="binding site" evidence="1">
    <location>
        <position position="287"/>
    </location>
    <ligand>
        <name>substrate</name>
    </ligand>
</feature>
<reference key="1">
    <citation type="journal article" date="2000" name="Nature">
        <title>The genome sequence of the plant pathogen Xylella fastidiosa.</title>
        <authorList>
            <person name="Simpson A.J.G."/>
            <person name="Reinach F.C."/>
            <person name="Arruda P."/>
            <person name="Abreu F.A."/>
            <person name="Acencio M."/>
            <person name="Alvarenga R."/>
            <person name="Alves L.M.C."/>
            <person name="Araya J.E."/>
            <person name="Baia G.S."/>
            <person name="Baptista C.S."/>
            <person name="Barros M.H."/>
            <person name="Bonaccorsi E.D."/>
            <person name="Bordin S."/>
            <person name="Bove J.M."/>
            <person name="Briones M.R.S."/>
            <person name="Bueno M.R.P."/>
            <person name="Camargo A.A."/>
            <person name="Camargo L.E.A."/>
            <person name="Carraro D.M."/>
            <person name="Carrer H."/>
            <person name="Colauto N.B."/>
            <person name="Colombo C."/>
            <person name="Costa F.F."/>
            <person name="Costa M.C.R."/>
            <person name="Costa-Neto C.M."/>
            <person name="Coutinho L.L."/>
            <person name="Cristofani M."/>
            <person name="Dias-Neto E."/>
            <person name="Docena C."/>
            <person name="El-Dorry H."/>
            <person name="Facincani A.P."/>
            <person name="Ferreira A.J.S."/>
            <person name="Ferreira V.C.A."/>
            <person name="Ferro J.A."/>
            <person name="Fraga J.S."/>
            <person name="Franca S.C."/>
            <person name="Franco M.C."/>
            <person name="Frohme M."/>
            <person name="Furlan L.R."/>
            <person name="Garnier M."/>
            <person name="Goldman G.H."/>
            <person name="Goldman M.H.S."/>
            <person name="Gomes S.L."/>
            <person name="Gruber A."/>
            <person name="Ho P.L."/>
            <person name="Hoheisel J.D."/>
            <person name="Junqueira M.L."/>
            <person name="Kemper E.L."/>
            <person name="Kitajima J.P."/>
            <person name="Krieger J.E."/>
            <person name="Kuramae E.E."/>
            <person name="Laigret F."/>
            <person name="Lambais M.R."/>
            <person name="Leite L.C.C."/>
            <person name="Lemos E.G.M."/>
            <person name="Lemos M.V.F."/>
            <person name="Lopes S.A."/>
            <person name="Lopes C.R."/>
            <person name="Machado J.A."/>
            <person name="Machado M.A."/>
            <person name="Madeira A.M.B.N."/>
            <person name="Madeira H.M.F."/>
            <person name="Marino C.L."/>
            <person name="Marques M.V."/>
            <person name="Martins E.A.L."/>
            <person name="Martins E.M.F."/>
            <person name="Matsukuma A.Y."/>
            <person name="Menck C.F.M."/>
            <person name="Miracca E.C."/>
            <person name="Miyaki C.Y."/>
            <person name="Monteiro-Vitorello C.B."/>
            <person name="Moon D.H."/>
            <person name="Nagai M.A."/>
            <person name="Nascimento A.L.T.O."/>
            <person name="Netto L.E.S."/>
            <person name="Nhani A. Jr."/>
            <person name="Nobrega F.G."/>
            <person name="Nunes L.R."/>
            <person name="Oliveira M.A."/>
            <person name="de Oliveira M.C."/>
            <person name="de Oliveira R.C."/>
            <person name="Palmieri D.A."/>
            <person name="Paris A."/>
            <person name="Peixoto B.R."/>
            <person name="Pereira G.A.G."/>
            <person name="Pereira H.A. Jr."/>
            <person name="Pesquero J.B."/>
            <person name="Quaggio R.B."/>
            <person name="Roberto P.G."/>
            <person name="Rodrigues V."/>
            <person name="de Rosa A.J.M."/>
            <person name="de Rosa V.E. Jr."/>
            <person name="de Sa R.G."/>
            <person name="Santelli R.V."/>
            <person name="Sawasaki H.E."/>
            <person name="da Silva A.C.R."/>
            <person name="da Silva A.M."/>
            <person name="da Silva F.R."/>
            <person name="Silva W.A. Jr."/>
            <person name="da Silveira J.F."/>
            <person name="Silvestri M.L.Z."/>
            <person name="Siqueira W.J."/>
            <person name="de Souza A.A."/>
            <person name="de Souza A.P."/>
            <person name="Terenzi M.F."/>
            <person name="Truffi D."/>
            <person name="Tsai S.M."/>
            <person name="Tsuhako M.H."/>
            <person name="Vallada H."/>
            <person name="Van Sluys M.A."/>
            <person name="Verjovski-Almeida S."/>
            <person name="Vettore A.L."/>
            <person name="Zago M.A."/>
            <person name="Zatz M."/>
            <person name="Meidanis J."/>
            <person name="Setubal J.C."/>
        </authorList>
    </citation>
    <scope>NUCLEOTIDE SEQUENCE [LARGE SCALE GENOMIC DNA]</scope>
    <source>
        <strain>9a5c</strain>
    </source>
</reference>
<sequence length="330" mass="34553">MLHPALALVPGEPAGVGPELCVRLVQQPRQDCRLVAFADPATLQAAAAALDLPLRLLPPEALAERPGDLPIQAQCHVHPTRFGHPDPANAPAVIAALCEAASDCVHGALHGIVTGPVHKAVINQSGIHYTGTTELLAAQAECDVVMMLANPHLRVALVTTHLPLRDVPDVITAALLERCLRIVNTAMCGDFGIATPRIAVLGLNPHAGEGGYLGREELDVVIPVLQRLRAEGMVLLGPLSADTAFLPTKLIGYDAVVAMYHDQGLPVLKHSGFEQAVNITLGLPYPRVAVDHGTALDLAGRGVADPSSLFAATALCARLAVSRALLSVRS</sequence>
<keyword id="KW-0170">Cobalt</keyword>
<keyword id="KW-0963">Cytoplasm</keyword>
<keyword id="KW-0460">Magnesium</keyword>
<keyword id="KW-0479">Metal-binding</keyword>
<keyword id="KW-0520">NAD</keyword>
<keyword id="KW-0521">NADP</keyword>
<keyword id="KW-0560">Oxidoreductase</keyword>
<keyword id="KW-0664">Pyridoxine biosynthesis</keyword>
<keyword id="KW-0862">Zinc</keyword>
<protein>
    <recommendedName>
        <fullName evidence="1">4-hydroxythreonine-4-phosphate dehydrogenase</fullName>
        <ecNumber evidence="1">1.1.1.262</ecNumber>
    </recommendedName>
    <alternativeName>
        <fullName evidence="1">4-(phosphohydroxy)-L-threonine dehydrogenase</fullName>
    </alternativeName>
</protein>
<name>PDXA_XYLFA</name>
<comment type="function">
    <text evidence="1">Catalyzes the NAD(P)-dependent oxidation of 4-(phosphooxy)-L-threonine (HTP) into 2-amino-3-oxo-4-(phosphooxy)butyric acid which spontaneously decarboxylates to form 3-amino-2-oxopropyl phosphate (AHAP).</text>
</comment>
<comment type="catalytic activity">
    <reaction evidence="1">
        <text>4-(phosphooxy)-L-threonine + NAD(+) = 3-amino-2-oxopropyl phosphate + CO2 + NADH</text>
        <dbReference type="Rhea" id="RHEA:32275"/>
        <dbReference type="ChEBI" id="CHEBI:16526"/>
        <dbReference type="ChEBI" id="CHEBI:57279"/>
        <dbReference type="ChEBI" id="CHEBI:57540"/>
        <dbReference type="ChEBI" id="CHEBI:57945"/>
        <dbReference type="ChEBI" id="CHEBI:58452"/>
        <dbReference type="EC" id="1.1.1.262"/>
    </reaction>
</comment>
<comment type="cofactor">
    <cofactor evidence="1">
        <name>Zn(2+)</name>
        <dbReference type="ChEBI" id="CHEBI:29105"/>
    </cofactor>
    <cofactor evidence="1">
        <name>Mg(2+)</name>
        <dbReference type="ChEBI" id="CHEBI:18420"/>
    </cofactor>
    <cofactor evidence="1">
        <name>Co(2+)</name>
        <dbReference type="ChEBI" id="CHEBI:48828"/>
    </cofactor>
    <text evidence="1">Binds 1 divalent metal cation per subunit. Can use ions such as Zn(2+), Mg(2+) or Co(2+).</text>
</comment>
<comment type="pathway">
    <text evidence="1">Cofactor biosynthesis; pyridoxine 5'-phosphate biosynthesis; pyridoxine 5'-phosphate from D-erythrose 4-phosphate: step 4/5.</text>
</comment>
<comment type="subunit">
    <text evidence="1">Homodimer.</text>
</comment>
<comment type="subcellular location">
    <subcellularLocation>
        <location evidence="1">Cytoplasm</location>
    </subcellularLocation>
</comment>
<comment type="miscellaneous">
    <text evidence="1">The active site is located at the dimer interface.</text>
</comment>
<comment type="similarity">
    <text evidence="1">Belongs to the PdxA family.</text>
</comment>